<gene>
    <name evidence="1" type="primary">nuoB</name>
    <name type="ordered locus">PSPTO_3366</name>
    <name type="ORF">PSPTO3366</name>
</gene>
<evidence type="ECO:0000255" key="1">
    <source>
        <dbReference type="HAMAP-Rule" id="MF_01356"/>
    </source>
</evidence>
<evidence type="ECO:0000256" key="2">
    <source>
        <dbReference type="SAM" id="MobiDB-lite"/>
    </source>
</evidence>
<name>NUOB_PSESM</name>
<dbReference type="EC" id="7.1.1.-" evidence="1"/>
<dbReference type="EMBL" id="AE016853">
    <property type="protein sequence ID" value="AAO56844.1"/>
    <property type="molecule type" value="Genomic_DNA"/>
</dbReference>
<dbReference type="RefSeq" id="NP_793149.1">
    <property type="nucleotide sequence ID" value="NC_004578.1"/>
</dbReference>
<dbReference type="RefSeq" id="WP_002554012.1">
    <property type="nucleotide sequence ID" value="NC_004578.1"/>
</dbReference>
<dbReference type="SMR" id="Q87ZQ8"/>
<dbReference type="STRING" id="223283.PSPTO_3366"/>
<dbReference type="KEGG" id="pst:PSPTO_3366"/>
<dbReference type="PATRIC" id="fig|223283.9.peg.3446"/>
<dbReference type="eggNOG" id="COG0377">
    <property type="taxonomic scope" value="Bacteria"/>
</dbReference>
<dbReference type="HOGENOM" id="CLU_055737_7_3_6"/>
<dbReference type="OrthoDB" id="9786737at2"/>
<dbReference type="PhylomeDB" id="Q87ZQ8"/>
<dbReference type="Proteomes" id="UP000002515">
    <property type="component" value="Chromosome"/>
</dbReference>
<dbReference type="GO" id="GO:0005886">
    <property type="term" value="C:plasma membrane"/>
    <property type="evidence" value="ECO:0007669"/>
    <property type="project" value="UniProtKB-SubCell"/>
</dbReference>
<dbReference type="GO" id="GO:0045271">
    <property type="term" value="C:respiratory chain complex I"/>
    <property type="evidence" value="ECO:0007669"/>
    <property type="project" value="TreeGrafter"/>
</dbReference>
<dbReference type="GO" id="GO:0051539">
    <property type="term" value="F:4 iron, 4 sulfur cluster binding"/>
    <property type="evidence" value="ECO:0007669"/>
    <property type="project" value="UniProtKB-KW"/>
</dbReference>
<dbReference type="GO" id="GO:0005506">
    <property type="term" value="F:iron ion binding"/>
    <property type="evidence" value="ECO:0007669"/>
    <property type="project" value="UniProtKB-UniRule"/>
</dbReference>
<dbReference type="GO" id="GO:0008137">
    <property type="term" value="F:NADH dehydrogenase (ubiquinone) activity"/>
    <property type="evidence" value="ECO:0007669"/>
    <property type="project" value="InterPro"/>
</dbReference>
<dbReference type="GO" id="GO:0050136">
    <property type="term" value="F:NADH:ubiquinone reductase (non-electrogenic) activity"/>
    <property type="evidence" value="ECO:0007669"/>
    <property type="project" value="UniProtKB-UniRule"/>
</dbReference>
<dbReference type="GO" id="GO:0048038">
    <property type="term" value="F:quinone binding"/>
    <property type="evidence" value="ECO:0007669"/>
    <property type="project" value="UniProtKB-KW"/>
</dbReference>
<dbReference type="GO" id="GO:0009060">
    <property type="term" value="P:aerobic respiration"/>
    <property type="evidence" value="ECO:0007669"/>
    <property type="project" value="TreeGrafter"/>
</dbReference>
<dbReference type="GO" id="GO:0015990">
    <property type="term" value="P:electron transport coupled proton transport"/>
    <property type="evidence" value="ECO:0007669"/>
    <property type="project" value="TreeGrafter"/>
</dbReference>
<dbReference type="FunFam" id="3.40.50.12280:FF:000002">
    <property type="entry name" value="NADH-quinone oxidoreductase subunit B"/>
    <property type="match status" value="1"/>
</dbReference>
<dbReference type="Gene3D" id="3.40.50.12280">
    <property type="match status" value="1"/>
</dbReference>
<dbReference type="HAMAP" id="MF_01356">
    <property type="entry name" value="NDH1_NuoB"/>
    <property type="match status" value="1"/>
</dbReference>
<dbReference type="InterPro" id="IPR006137">
    <property type="entry name" value="NADH_UbQ_OxRdtase-like_20kDa"/>
</dbReference>
<dbReference type="InterPro" id="IPR006138">
    <property type="entry name" value="NADH_UQ_OxRdtase_20Kd_su"/>
</dbReference>
<dbReference type="NCBIfam" id="TIGR01957">
    <property type="entry name" value="nuoB_fam"/>
    <property type="match status" value="1"/>
</dbReference>
<dbReference type="NCBIfam" id="NF005012">
    <property type="entry name" value="PRK06411.1"/>
    <property type="match status" value="1"/>
</dbReference>
<dbReference type="PANTHER" id="PTHR11995">
    <property type="entry name" value="NADH DEHYDROGENASE"/>
    <property type="match status" value="1"/>
</dbReference>
<dbReference type="PANTHER" id="PTHR11995:SF14">
    <property type="entry name" value="NADH DEHYDROGENASE [UBIQUINONE] IRON-SULFUR PROTEIN 7, MITOCHONDRIAL"/>
    <property type="match status" value="1"/>
</dbReference>
<dbReference type="Pfam" id="PF01058">
    <property type="entry name" value="Oxidored_q6"/>
    <property type="match status" value="1"/>
</dbReference>
<dbReference type="SUPFAM" id="SSF56770">
    <property type="entry name" value="HydA/Nqo6-like"/>
    <property type="match status" value="1"/>
</dbReference>
<dbReference type="PROSITE" id="PS01150">
    <property type="entry name" value="COMPLEX1_20K"/>
    <property type="match status" value="1"/>
</dbReference>
<reference key="1">
    <citation type="journal article" date="2003" name="Proc. Natl. Acad. Sci. U.S.A.">
        <title>The complete genome sequence of the Arabidopsis and tomato pathogen Pseudomonas syringae pv. tomato DC3000.</title>
        <authorList>
            <person name="Buell C.R."/>
            <person name="Joardar V."/>
            <person name="Lindeberg M."/>
            <person name="Selengut J."/>
            <person name="Paulsen I.T."/>
            <person name="Gwinn M.L."/>
            <person name="Dodson R.J."/>
            <person name="DeBoy R.T."/>
            <person name="Durkin A.S."/>
            <person name="Kolonay J.F."/>
            <person name="Madupu R."/>
            <person name="Daugherty S.C."/>
            <person name="Brinkac L.M."/>
            <person name="Beanan M.J."/>
            <person name="Haft D.H."/>
            <person name="Nelson W.C."/>
            <person name="Davidsen T.M."/>
            <person name="Zafar N."/>
            <person name="Zhou L."/>
            <person name="Liu J."/>
            <person name="Yuan Q."/>
            <person name="Khouri H.M."/>
            <person name="Fedorova N.B."/>
            <person name="Tran B."/>
            <person name="Russell D."/>
            <person name="Berry K.J."/>
            <person name="Utterback T.R."/>
            <person name="Van Aken S.E."/>
            <person name="Feldblyum T.V."/>
            <person name="D'Ascenzo M."/>
            <person name="Deng W.-L."/>
            <person name="Ramos A.R."/>
            <person name="Alfano J.R."/>
            <person name="Cartinhour S."/>
            <person name="Chatterjee A.K."/>
            <person name="Delaney T.P."/>
            <person name="Lazarowitz S.G."/>
            <person name="Martin G.B."/>
            <person name="Schneider D.J."/>
            <person name="Tang X."/>
            <person name="Bender C.L."/>
            <person name="White O."/>
            <person name="Fraser C.M."/>
            <person name="Collmer A."/>
        </authorList>
    </citation>
    <scope>NUCLEOTIDE SEQUENCE [LARGE SCALE GENOMIC DNA]</scope>
    <source>
        <strain>ATCC BAA-871 / DC3000</strain>
    </source>
</reference>
<protein>
    <recommendedName>
        <fullName evidence="1">NADH-quinone oxidoreductase subunit B</fullName>
        <ecNumber evidence="1">7.1.1.-</ecNumber>
    </recommendedName>
    <alternativeName>
        <fullName evidence="1">NADH dehydrogenase I subunit B</fullName>
    </alternativeName>
    <alternativeName>
        <fullName evidence="1">NDH-1 subunit B</fullName>
    </alternativeName>
</protein>
<feature type="chain" id="PRO_0000376320" description="NADH-quinone oxidoreductase subunit B">
    <location>
        <begin position="1"/>
        <end position="224"/>
    </location>
</feature>
<feature type="region of interest" description="Disordered" evidence="2">
    <location>
        <begin position="201"/>
        <end position="224"/>
    </location>
</feature>
<feature type="compositionally biased region" description="Basic and acidic residues" evidence="2">
    <location>
        <begin position="203"/>
        <end position="212"/>
    </location>
</feature>
<feature type="compositionally biased region" description="Polar residues" evidence="2">
    <location>
        <begin position="213"/>
        <end position="224"/>
    </location>
</feature>
<feature type="binding site" evidence="1">
    <location>
        <position position="67"/>
    </location>
    <ligand>
        <name>[4Fe-4S] cluster</name>
        <dbReference type="ChEBI" id="CHEBI:49883"/>
    </ligand>
</feature>
<feature type="binding site" evidence="1">
    <location>
        <position position="68"/>
    </location>
    <ligand>
        <name>[4Fe-4S] cluster</name>
        <dbReference type="ChEBI" id="CHEBI:49883"/>
    </ligand>
</feature>
<feature type="binding site" evidence="1">
    <location>
        <position position="133"/>
    </location>
    <ligand>
        <name>[4Fe-4S] cluster</name>
        <dbReference type="ChEBI" id="CHEBI:49883"/>
    </ligand>
</feature>
<feature type="binding site" evidence="1">
    <location>
        <position position="162"/>
    </location>
    <ligand>
        <name>[4Fe-4S] cluster</name>
        <dbReference type="ChEBI" id="CHEBI:49883"/>
    </ligand>
</feature>
<sequence length="224" mass="25454">MQYNLTRIDPDAPNEQYPIGKRETVSDPLEDQVHKNIYMGKLEDVLNGAVNWGRKNSLWPYNFGLSCCYVEMTTAFTAPHDIARFGAEVIRASPRQADFMVIAGTCFIKMAPIIQRLYEQMLEPKWVISMGSCANSGGMYDIYSVVQGVDKFLPVDVYVPGCPPRPEAFLQGLMLLQESIGKERRPLSWVVGDQGVYRAEMPSQKEQRREQRIQVTNLRSPDEV</sequence>
<keyword id="KW-0004">4Fe-4S</keyword>
<keyword id="KW-0997">Cell inner membrane</keyword>
<keyword id="KW-1003">Cell membrane</keyword>
<keyword id="KW-0408">Iron</keyword>
<keyword id="KW-0411">Iron-sulfur</keyword>
<keyword id="KW-0472">Membrane</keyword>
<keyword id="KW-0479">Metal-binding</keyword>
<keyword id="KW-0520">NAD</keyword>
<keyword id="KW-0874">Quinone</keyword>
<keyword id="KW-1185">Reference proteome</keyword>
<keyword id="KW-1278">Translocase</keyword>
<keyword id="KW-0813">Transport</keyword>
<keyword id="KW-0830">Ubiquinone</keyword>
<accession>Q87ZQ8</accession>
<organism>
    <name type="scientific">Pseudomonas syringae pv. tomato (strain ATCC BAA-871 / DC3000)</name>
    <dbReference type="NCBI Taxonomy" id="223283"/>
    <lineage>
        <taxon>Bacteria</taxon>
        <taxon>Pseudomonadati</taxon>
        <taxon>Pseudomonadota</taxon>
        <taxon>Gammaproteobacteria</taxon>
        <taxon>Pseudomonadales</taxon>
        <taxon>Pseudomonadaceae</taxon>
        <taxon>Pseudomonas</taxon>
    </lineage>
</organism>
<proteinExistence type="inferred from homology"/>
<comment type="function">
    <text evidence="1">NDH-1 shuttles electrons from NADH, via FMN and iron-sulfur (Fe-S) centers, to quinones in the respiratory chain. The immediate electron acceptor for the enzyme in this species is believed to be ubiquinone. Couples the redox reaction to proton translocation (for every two electrons transferred, four hydrogen ions are translocated across the cytoplasmic membrane), and thus conserves the redox energy in a proton gradient.</text>
</comment>
<comment type="catalytic activity">
    <reaction evidence="1">
        <text>a quinone + NADH + 5 H(+)(in) = a quinol + NAD(+) + 4 H(+)(out)</text>
        <dbReference type="Rhea" id="RHEA:57888"/>
        <dbReference type="ChEBI" id="CHEBI:15378"/>
        <dbReference type="ChEBI" id="CHEBI:24646"/>
        <dbReference type="ChEBI" id="CHEBI:57540"/>
        <dbReference type="ChEBI" id="CHEBI:57945"/>
        <dbReference type="ChEBI" id="CHEBI:132124"/>
    </reaction>
</comment>
<comment type="cofactor">
    <cofactor evidence="1">
        <name>[4Fe-4S] cluster</name>
        <dbReference type="ChEBI" id="CHEBI:49883"/>
    </cofactor>
    <text evidence="1">Binds 1 [4Fe-4S] cluster.</text>
</comment>
<comment type="subunit">
    <text evidence="1">NDH-1 is composed of 13 different subunits. Subunits NuoB, CD, E, F, and G constitute the peripheral sector of the complex.</text>
</comment>
<comment type="subcellular location">
    <subcellularLocation>
        <location evidence="1">Cell inner membrane</location>
        <topology evidence="1">Peripheral membrane protein</topology>
        <orientation evidence="1">Cytoplasmic side</orientation>
    </subcellularLocation>
</comment>
<comment type="similarity">
    <text evidence="1">Belongs to the complex I 20 kDa subunit family.</text>
</comment>